<accession>Q8N144</accession>
<accession>Q6ZUW6</accession>
<proteinExistence type="evidence at protein level"/>
<feature type="chain" id="PRO_0000312990" description="Gap junction delta-3 protein">
    <location>
        <begin position="1"/>
        <end position="294"/>
    </location>
</feature>
<feature type="topological domain" description="Cytoplasmic" evidence="2">
    <location>
        <begin position="1"/>
        <end position="24"/>
    </location>
</feature>
<feature type="transmembrane region" description="Helical" evidence="2">
    <location>
        <begin position="25"/>
        <end position="45"/>
    </location>
</feature>
<feature type="topological domain" description="Extracellular" evidence="2">
    <location>
        <begin position="46"/>
        <end position="76"/>
    </location>
</feature>
<feature type="transmembrane region" description="Helical" evidence="2">
    <location>
        <begin position="77"/>
        <end position="97"/>
    </location>
</feature>
<feature type="topological domain" description="Cytoplasmic" evidence="2">
    <location>
        <begin position="98"/>
        <end position="136"/>
    </location>
</feature>
<feature type="transmembrane region" description="Helical" evidence="2">
    <location>
        <begin position="137"/>
        <end position="157"/>
    </location>
</feature>
<feature type="topological domain" description="Extracellular" evidence="2">
    <location>
        <begin position="158"/>
        <end position="188"/>
    </location>
</feature>
<feature type="transmembrane region" description="Helical" evidence="2">
    <location>
        <begin position="189"/>
        <end position="209"/>
    </location>
</feature>
<feature type="topological domain" description="Cytoplasmic" evidence="2">
    <location>
        <begin position="210"/>
        <end position="294"/>
    </location>
</feature>
<feature type="region of interest" description="Disordered" evidence="3">
    <location>
        <begin position="233"/>
        <end position="294"/>
    </location>
</feature>
<feature type="compositionally biased region" description="Pro residues" evidence="3">
    <location>
        <begin position="238"/>
        <end position="250"/>
    </location>
</feature>
<feature type="splice variant" id="VSP_029984" description="In isoform 2." evidence="6">
    <original>PPPALPSRRPGPEPCAPPAYAHPAPASLRECGSGRGKASPATGRRDLAI</original>
    <variation>IVVTWEENRHLQGEGSPGSPHPKTELDAPRFRRESTSPAGWHCSLPFHGT</variation>
    <location>
        <begin position="246"/>
        <end position="294"/>
    </location>
</feature>
<gene>
    <name type="primary">GJD3</name>
    <name type="synonym">GJA11</name>
    <name type="synonym">GJC1</name>
</gene>
<name>CXD3_HUMAN</name>
<sequence>MGEWAFLGSLLDAVQLQSPLVGRLWLVVMLIFRILVLATVGGAVFEDEQEEFVCNTLQPGCRQTCYDRAFPVSHYRFWLFHILLLSAPPVLFVVYSMHRAGKEAGGAEAAAQCAPGLPEAQCAPCALRARRARRCYLLSVALRLLAELTFLGGQALLYGFRVAPHFACAGPPCPHTVDCFVSRPTEKTVFVLFYFAVGLLSALLSVAELGHLLWKGRPRAGERDNRCNRAHEEAQKLLPPPPPPPPPPALPSRRPGPEPCAPPAYAHPAPASLRECGSGRGKASPATGRRDLAI</sequence>
<comment type="function">
    <text evidence="1">One gap junction consists of a cluster of closely packed pairs of transmembrane channels, the connexons, through which materials of low MW diffuse from one cell to a neighboring cell.</text>
</comment>
<comment type="subunit">
    <text evidence="1 4">A connexon is composed of a hexamer of connexins (By similarity). Interacts with TJP1.</text>
</comment>
<comment type="interaction">
    <interactant intactId="EBI-2629520">
        <id>Q8N144</id>
    </interactant>
    <interactant intactId="EBI-79553">
        <id>Q07157</id>
        <label>TJP1</label>
    </interactant>
    <organismsDiffer>false</organismsDiffer>
    <experiments>2</experiments>
</comment>
<comment type="subcellular location">
    <subcellularLocation>
        <location evidence="4">Cell membrane</location>
        <topology evidence="4">Multi-pass membrane protein</topology>
    </subcellularLocation>
    <subcellularLocation>
        <location evidence="4">Cell junction</location>
        <location evidence="4">Gap junction</location>
    </subcellularLocation>
</comment>
<comment type="alternative products">
    <event type="alternative splicing"/>
    <isoform>
        <id>Q8N144-1</id>
        <name>1</name>
        <sequence type="displayed"/>
    </isoform>
    <isoform>
        <id>Q8N144-2</id>
        <name>2</name>
        <sequence type="described" ref="VSP_029984"/>
    </isoform>
</comment>
<comment type="tissue specificity">
    <text evidence="4 5">Expressed in vascular smooth muscle cells. Found in heart, colon, and artery (at protein level). Found in cerebral cortex, heart, liver, lung, kidney, spleen and testis.</text>
</comment>
<comment type="similarity">
    <text evidence="7">Belongs to the connexin family. Delta-type subfamily.</text>
</comment>
<reference key="1">
    <citation type="journal article" date="2002" name="J. Biol. Chem.">
        <title>Molecular cloning, functional expression, and tissue distribution of a novel human gap junction-forming protein, connexin-31.9. Interaction with zona occludens protein-1.</title>
        <authorList>
            <person name="Nielsen P.A."/>
            <person name="Beahm D.L."/>
            <person name="Giepmans B.N."/>
            <person name="Baruch A."/>
            <person name="Hall J.E."/>
            <person name="Kumar N.M."/>
        </authorList>
    </citation>
    <scope>NUCLEOTIDE SEQUENCE [GENOMIC DNA]</scope>
    <scope>SUBCELLULAR LOCATION</scope>
    <scope>INTERACTION WITH TJP1</scope>
    <scope>TISSUE SPECIFICITY</scope>
</reference>
<reference key="2">
    <citation type="journal article" date="2002" name="Am. J. Physiol.">
        <title>Virtual cloning, functional expression, and gating analysis of human connexin31.9.</title>
        <authorList>
            <person name="White T.W."/>
            <person name="Srinivas M."/>
            <person name="Ripps H."/>
            <person name="Trovato-Salinaro A."/>
            <person name="Condorelli D.F."/>
            <person name="Bruzzone R."/>
        </authorList>
    </citation>
    <scope>NUCLEOTIDE SEQUENCE [GENOMIC DNA]</scope>
    <scope>TISSUE SPECIFICITY</scope>
</reference>
<reference key="3">
    <citation type="journal article" date="2004" name="Nat. Genet.">
        <title>Complete sequencing and characterization of 21,243 full-length human cDNAs.</title>
        <authorList>
            <person name="Ota T."/>
            <person name="Suzuki Y."/>
            <person name="Nishikawa T."/>
            <person name="Otsuki T."/>
            <person name="Sugiyama T."/>
            <person name="Irie R."/>
            <person name="Wakamatsu A."/>
            <person name="Hayashi K."/>
            <person name="Sato H."/>
            <person name="Nagai K."/>
            <person name="Kimura K."/>
            <person name="Makita H."/>
            <person name="Sekine M."/>
            <person name="Obayashi M."/>
            <person name="Nishi T."/>
            <person name="Shibahara T."/>
            <person name="Tanaka T."/>
            <person name="Ishii S."/>
            <person name="Yamamoto J."/>
            <person name="Saito K."/>
            <person name="Kawai Y."/>
            <person name="Isono Y."/>
            <person name="Nakamura Y."/>
            <person name="Nagahari K."/>
            <person name="Murakami K."/>
            <person name="Yasuda T."/>
            <person name="Iwayanagi T."/>
            <person name="Wagatsuma M."/>
            <person name="Shiratori A."/>
            <person name="Sudo H."/>
            <person name="Hosoiri T."/>
            <person name="Kaku Y."/>
            <person name="Kodaira H."/>
            <person name="Kondo H."/>
            <person name="Sugawara M."/>
            <person name="Takahashi M."/>
            <person name="Kanda K."/>
            <person name="Yokoi T."/>
            <person name="Furuya T."/>
            <person name="Kikkawa E."/>
            <person name="Omura Y."/>
            <person name="Abe K."/>
            <person name="Kamihara K."/>
            <person name="Katsuta N."/>
            <person name="Sato K."/>
            <person name="Tanikawa M."/>
            <person name="Yamazaki M."/>
            <person name="Ninomiya K."/>
            <person name="Ishibashi T."/>
            <person name="Yamashita H."/>
            <person name="Murakawa K."/>
            <person name="Fujimori K."/>
            <person name="Tanai H."/>
            <person name="Kimata M."/>
            <person name="Watanabe M."/>
            <person name="Hiraoka S."/>
            <person name="Chiba Y."/>
            <person name="Ishida S."/>
            <person name="Ono Y."/>
            <person name="Takiguchi S."/>
            <person name="Watanabe S."/>
            <person name="Yosida M."/>
            <person name="Hotuta T."/>
            <person name="Kusano J."/>
            <person name="Kanehori K."/>
            <person name="Takahashi-Fujii A."/>
            <person name="Hara H."/>
            <person name="Tanase T.-O."/>
            <person name="Nomura Y."/>
            <person name="Togiya S."/>
            <person name="Komai F."/>
            <person name="Hara R."/>
            <person name="Takeuchi K."/>
            <person name="Arita M."/>
            <person name="Imose N."/>
            <person name="Musashino K."/>
            <person name="Yuuki H."/>
            <person name="Oshima A."/>
            <person name="Sasaki N."/>
            <person name="Aotsuka S."/>
            <person name="Yoshikawa Y."/>
            <person name="Matsunawa H."/>
            <person name="Ichihara T."/>
            <person name="Shiohata N."/>
            <person name="Sano S."/>
            <person name="Moriya S."/>
            <person name="Momiyama H."/>
            <person name="Satoh N."/>
            <person name="Takami S."/>
            <person name="Terashima Y."/>
            <person name="Suzuki O."/>
            <person name="Nakagawa S."/>
            <person name="Senoh A."/>
            <person name="Mizoguchi H."/>
            <person name="Goto Y."/>
            <person name="Shimizu F."/>
            <person name="Wakebe H."/>
            <person name="Hishigaki H."/>
            <person name="Watanabe T."/>
            <person name="Sugiyama A."/>
            <person name="Takemoto M."/>
            <person name="Kawakami B."/>
            <person name="Yamazaki M."/>
            <person name="Watanabe K."/>
            <person name="Kumagai A."/>
            <person name="Itakura S."/>
            <person name="Fukuzumi Y."/>
            <person name="Fujimori Y."/>
            <person name="Komiyama M."/>
            <person name="Tashiro H."/>
            <person name="Tanigami A."/>
            <person name="Fujiwara T."/>
            <person name="Ono T."/>
            <person name="Yamada K."/>
            <person name="Fujii Y."/>
            <person name="Ozaki K."/>
            <person name="Hirao M."/>
            <person name="Ohmori Y."/>
            <person name="Kawabata A."/>
            <person name="Hikiji T."/>
            <person name="Kobatake N."/>
            <person name="Inagaki H."/>
            <person name="Ikema Y."/>
            <person name="Okamoto S."/>
            <person name="Okitani R."/>
            <person name="Kawakami T."/>
            <person name="Noguchi S."/>
            <person name="Itoh T."/>
            <person name="Shigeta K."/>
            <person name="Senba T."/>
            <person name="Matsumura K."/>
            <person name="Nakajima Y."/>
            <person name="Mizuno T."/>
            <person name="Morinaga M."/>
            <person name="Sasaki M."/>
            <person name="Togashi T."/>
            <person name="Oyama M."/>
            <person name="Hata H."/>
            <person name="Watanabe M."/>
            <person name="Komatsu T."/>
            <person name="Mizushima-Sugano J."/>
            <person name="Satoh T."/>
            <person name="Shirai Y."/>
            <person name="Takahashi Y."/>
            <person name="Nakagawa K."/>
            <person name="Okumura K."/>
            <person name="Nagase T."/>
            <person name="Nomura N."/>
            <person name="Kikuchi H."/>
            <person name="Masuho Y."/>
            <person name="Yamashita R."/>
            <person name="Nakai K."/>
            <person name="Yada T."/>
            <person name="Nakamura Y."/>
            <person name="Ohara O."/>
            <person name="Isogai T."/>
            <person name="Sugano S."/>
        </authorList>
    </citation>
    <scope>NUCLEOTIDE SEQUENCE [LARGE SCALE MRNA] (ISOFORM 2)</scope>
    <source>
        <tissue>Lung</tissue>
    </source>
</reference>
<reference key="4">
    <citation type="submission" date="2005-07" db="EMBL/GenBank/DDBJ databases">
        <authorList>
            <person name="Mural R.J."/>
            <person name="Istrail S."/>
            <person name="Sutton G.G."/>
            <person name="Florea L."/>
            <person name="Halpern A.L."/>
            <person name="Mobarry C.M."/>
            <person name="Lippert R."/>
            <person name="Walenz B."/>
            <person name="Shatkay H."/>
            <person name="Dew I."/>
            <person name="Miller J.R."/>
            <person name="Flanigan M.J."/>
            <person name="Edwards N.J."/>
            <person name="Bolanos R."/>
            <person name="Fasulo D."/>
            <person name="Halldorsson B.V."/>
            <person name="Hannenhalli S."/>
            <person name="Turner R."/>
            <person name="Yooseph S."/>
            <person name="Lu F."/>
            <person name="Nusskern D.R."/>
            <person name="Shue B.C."/>
            <person name="Zheng X.H."/>
            <person name="Zhong F."/>
            <person name="Delcher A.L."/>
            <person name="Huson D.H."/>
            <person name="Kravitz S.A."/>
            <person name="Mouchard L."/>
            <person name="Reinert K."/>
            <person name="Remington K.A."/>
            <person name="Clark A.G."/>
            <person name="Waterman M.S."/>
            <person name="Eichler E.E."/>
            <person name="Adams M.D."/>
            <person name="Hunkapiller M.W."/>
            <person name="Myers E.W."/>
            <person name="Venter J.C."/>
        </authorList>
    </citation>
    <scope>NUCLEOTIDE SEQUENCE [LARGE SCALE GENOMIC DNA]</scope>
</reference>
<keyword id="KW-0025">Alternative splicing</keyword>
<keyword id="KW-0965">Cell junction</keyword>
<keyword id="KW-1003">Cell membrane</keyword>
<keyword id="KW-0303">Gap junction</keyword>
<keyword id="KW-0472">Membrane</keyword>
<keyword id="KW-1185">Reference proteome</keyword>
<keyword id="KW-0812">Transmembrane</keyword>
<keyword id="KW-1133">Transmembrane helix</keyword>
<evidence type="ECO:0000250" key="1"/>
<evidence type="ECO:0000255" key="2"/>
<evidence type="ECO:0000256" key="3">
    <source>
        <dbReference type="SAM" id="MobiDB-lite"/>
    </source>
</evidence>
<evidence type="ECO:0000269" key="4">
    <source>
    </source>
</evidence>
<evidence type="ECO:0000269" key="5">
    <source>
    </source>
</evidence>
<evidence type="ECO:0000303" key="6">
    <source>
    </source>
</evidence>
<evidence type="ECO:0000305" key="7"/>
<organism>
    <name type="scientific">Homo sapiens</name>
    <name type="common">Human</name>
    <dbReference type="NCBI Taxonomy" id="9606"/>
    <lineage>
        <taxon>Eukaryota</taxon>
        <taxon>Metazoa</taxon>
        <taxon>Chordata</taxon>
        <taxon>Craniata</taxon>
        <taxon>Vertebrata</taxon>
        <taxon>Euteleostomi</taxon>
        <taxon>Mammalia</taxon>
        <taxon>Eutheria</taxon>
        <taxon>Euarchontoglires</taxon>
        <taxon>Primates</taxon>
        <taxon>Haplorrhini</taxon>
        <taxon>Catarrhini</taxon>
        <taxon>Hominidae</taxon>
        <taxon>Homo</taxon>
    </lineage>
</organism>
<dbReference type="EMBL" id="AY093445">
    <property type="protein sequence ID" value="AAM18801.1"/>
    <property type="molecule type" value="Genomic_DNA"/>
</dbReference>
<dbReference type="EMBL" id="AF514298">
    <property type="protein sequence ID" value="AAM53649.1"/>
    <property type="molecule type" value="Genomic_DNA"/>
</dbReference>
<dbReference type="EMBL" id="AK125254">
    <property type="protein sequence ID" value="BAC86102.1"/>
    <property type="molecule type" value="mRNA"/>
</dbReference>
<dbReference type="EMBL" id="CH471152">
    <property type="protein sequence ID" value="EAW60660.1"/>
    <property type="molecule type" value="Genomic_DNA"/>
</dbReference>
<dbReference type="CCDS" id="CCDS58547.1">
    <molecule id="Q8N144-1"/>
</dbReference>
<dbReference type="RefSeq" id="NP_689343.3">
    <molecule id="Q8N144-1"/>
    <property type="nucleotide sequence ID" value="NM_152219.3"/>
</dbReference>
<dbReference type="SMR" id="Q8N144"/>
<dbReference type="BioGRID" id="125915">
    <property type="interactions" value="452"/>
</dbReference>
<dbReference type="FunCoup" id="Q8N144">
    <property type="interactions" value="58"/>
</dbReference>
<dbReference type="IntAct" id="Q8N144">
    <property type="interactions" value="2"/>
</dbReference>
<dbReference type="STRING" id="9606.ENSP00000463752"/>
<dbReference type="TCDB" id="1.A.24.1.17">
    <property type="family name" value="the gap junction-forming connexin (connexin) family"/>
</dbReference>
<dbReference type="PhosphoSitePlus" id="Q8N144"/>
<dbReference type="BioMuta" id="GJD3"/>
<dbReference type="DMDM" id="74750879"/>
<dbReference type="MassIVE" id="Q8N144"/>
<dbReference type="PaxDb" id="9606-ENSP00000463752"/>
<dbReference type="PeptideAtlas" id="Q8N144"/>
<dbReference type="Antibodypedia" id="51141">
    <property type="antibodies" value="30 antibodies from 12 providers"/>
</dbReference>
<dbReference type="DNASU" id="125111"/>
<dbReference type="Ensembl" id="ENST00000578689.2">
    <molecule id="Q8N144-1"/>
    <property type="protein sequence ID" value="ENSP00000463752.1"/>
    <property type="gene ID" value="ENSG00000183153.7"/>
</dbReference>
<dbReference type="GeneID" id="125111"/>
<dbReference type="KEGG" id="hsa:125111"/>
<dbReference type="MANE-Select" id="ENST00000578689.2">
    <property type="protein sequence ID" value="ENSP00000463752.1"/>
    <property type="RefSeq nucleotide sequence ID" value="NM_152219.4"/>
    <property type="RefSeq protein sequence ID" value="NP_689343.3"/>
</dbReference>
<dbReference type="UCSC" id="uc010cwz.4">
    <molecule id="Q8N144-1"/>
    <property type="organism name" value="human"/>
</dbReference>
<dbReference type="AGR" id="HGNC:19147"/>
<dbReference type="CTD" id="125111"/>
<dbReference type="DisGeNET" id="125111"/>
<dbReference type="GeneCards" id="GJD3"/>
<dbReference type="HGNC" id="HGNC:19147">
    <property type="gene designation" value="GJD3"/>
</dbReference>
<dbReference type="HPA" id="ENSG00000183153">
    <property type="expression patterns" value="Tissue enhanced (lymphoid)"/>
</dbReference>
<dbReference type="MIM" id="607425">
    <property type="type" value="gene"/>
</dbReference>
<dbReference type="neXtProt" id="NX_Q8N144"/>
<dbReference type="OpenTargets" id="ENSG00000183153"/>
<dbReference type="PharmGKB" id="PA162389707"/>
<dbReference type="VEuPathDB" id="HostDB:ENSG00000183153"/>
<dbReference type="eggNOG" id="ENOG502R6H2">
    <property type="taxonomic scope" value="Eukaryota"/>
</dbReference>
<dbReference type="GeneTree" id="ENSGT01130000278276"/>
<dbReference type="HOGENOM" id="CLU_037388_4_2_1"/>
<dbReference type="InParanoid" id="Q8N144"/>
<dbReference type="OMA" id="YSMHQAS"/>
<dbReference type="OrthoDB" id="10061722at2759"/>
<dbReference type="PAN-GO" id="Q8N144">
    <property type="GO annotations" value="3 GO annotations based on evolutionary models"/>
</dbReference>
<dbReference type="PhylomeDB" id="Q8N144"/>
<dbReference type="PathwayCommons" id="Q8N144"/>
<dbReference type="Reactome" id="R-HSA-190861">
    <property type="pathway name" value="Gap junction assembly"/>
</dbReference>
<dbReference type="SignaLink" id="Q8N144"/>
<dbReference type="BioGRID-ORCS" id="125111">
    <property type="hits" value="16 hits in 1153 CRISPR screens"/>
</dbReference>
<dbReference type="ChiTaRS" id="GJD3">
    <property type="organism name" value="human"/>
</dbReference>
<dbReference type="GeneWiki" id="GJD3"/>
<dbReference type="GenomeRNAi" id="125111"/>
<dbReference type="Pharos" id="Q8N144">
    <property type="development level" value="Tbio"/>
</dbReference>
<dbReference type="PRO" id="PR:Q8N144"/>
<dbReference type="Proteomes" id="UP000005640">
    <property type="component" value="Chromosome 17"/>
</dbReference>
<dbReference type="RNAct" id="Q8N144">
    <property type="molecule type" value="protein"/>
</dbReference>
<dbReference type="Bgee" id="ENSG00000183153">
    <property type="expression patterns" value="Expressed in primordial germ cell in gonad and 114 other cell types or tissues"/>
</dbReference>
<dbReference type="ExpressionAtlas" id="Q8N144">
    <property type="expression patterns" value="baseline and differential"/>
</dbReference>
<dbReference type="GO" id="GO:0009986">
    <property type="term" value="C:cell surface"/>
    <property type="evidence" value="ECO:0000314"/>
    <property type="project" value="UniProtKB"/>
</dbReference>
<dbReference type="GO" id="GO:0005922">
    <property type="term" value="C:connexin complex"/>
    <property type="evidence" value="ECO:0000314"/>
    <property type="project" value="UniProtKB"/>
</dbReference>
<dbReference type="GO" id="GO:0005886">
    <property type="term" value="C:plasma membrane"/>
    <property type="evidence" value="ECO:0000304"/>
    <property type="project" value="UniProtKB"/>
</dbReference>
<dbReference type="GO" id="GO:0086077">
    <property type="term" value="F:gap junction channel activity involved in AV node cell-bundle of His cell electrical coupling"/>
    <property type="evidence" value="ECO:0000318"/>
    <property type="project" value="GO_Central"/>
</dbReference>
<dbReference type="GO" id="GO:0005216">
    <property type="term" value="F:monoatomic ion channel activity"/>
    <property type="evidence" value="ECO:0007669"/>
    <property type="project" value="Ensembl"/>
</dbReference>
<dbReference type="GO" id="GO:0007154">
    <property type="term" value="P:cell communication"/>
    <property type="evidence" value="ECO:0000304"/>
    <property type="project" value="UniProtKB"/>
</dbReference>
<dbReference type="GO" id="GO:0007267">
    <property type="term" value="P:cell-cell signaling"/>
    <property type="evidence" value="ECO:0000318"/>
    <property type="project" value="GO_Central"/>
</dbReference>
<dbReference type="GO" id="GO:0016264">
    <property type="term" value="P:gap junction assembly"/>
    <property type="evidence" value="ECO:0000314"/>
    <property type="project" value="UniProtKB"/>
</dbReference>
<dbReference type="GO" id="GO:1903780">
    <property type="term" value="P:negative regulation of cardiac conduction"/>
    <property type="evidence" value="ECO:0007669"/>
    <property type="project" value="Ensembl"/>
</dbReference>
<dbReference type="GO" id="GO:0010459">
    <property type="term" value="P:negative regulation of heart rate"/>
    <property type="evidence" value="ECO:0007669"/>
    <property type="project" value="Ensembl"/>
</dbReference>
<dbReference type="GO" id="GO:0009749">
    <property type="term" value="P:response to glucose"/>
    <property type="evidence" value="ECO:0007669"/>
    <property type="project" value="Ensembl"/>
</dbReference>
<dbReference type="FunFam" id="1.20.1440.80:FF:000005">
    <property type="entry name" value="Gap junction protein"/>
    <property type="match status" value="1"/>
</dbReference>
<dbReference type="Gene3D" id="1.20.1440.80">
    <property type="entry name" value="Gap junction channel protein cysteine-rich domain"/>
    <property type="match status" value="1"/>
</dbReference>
<dbReference type="InterPro" id="IPR000500">
    <property type="entry name" value="Connexin"/>
</dbReference>
<dbReference type="InterPro" id="IPR019570">
    <property type="entry name" value="Connexin_CCC"/>
</dbReference>
<dbReference type="InterPro" id="IPR017990">
    <property type="entry name" value="Connexin_CS"/>
</dbReference>
<dbReference type="InterPro" id="IPR013092">
    <property type="entry name" value="Connexin_N"/>
</dbReference>
<dbReference type="InterPro" id="IPR038359">
    <property type="entry name" value="Connexin_N_sf"/>
</dbReference>
<dbReference type="PANTHER" id="PTHR11984">
    <property type="entry name" value="CONNEXIN"/>
    <property type="match status" value="1"/>
</dbReference>
<dbReference type="PANTHER" id="PTHR11984:SF5">
    <property type="entry name" value="GAP JUNCTION DELTA-3 PROTEIN"/>
    <property type="match status" value="1"/>
</dbReference>
<dbReference type="Pfam" id="PF00029">
    <property type="entry name" value="Connexin"/>
    <property type="match status" value="1"/>
</dbReference>
<dbReference type="PRINTS" id="PR00206">
    <property type="entry name" value="CONNEXIN"/>
</dbReference>
<dbReference type="SMART" id="SM00037">
    <property type="entry name" value="CNX"/>
    <property type="match status" value="1"/>
</dbReference>
<dbReference type="SMART" id="SM01089">
    <property type="entry name" value="Connexin_CCC"/>
    <property type="match status" value="1"/>
</dbReference>
<dbReference type="PROSITE" id="PS00408">
    <property type="entry name" value="CONNEXINS_2"/>
    <property type="match status" value="1"/>
</dbReference>
<protein>
    <recommendedName>
        <fullName>Gap junction delta-3 protein</fullName>
    </recommendedName>
    <alternativeName>
        <fullName>Connexin-31.9</fullName>
        <shortName>Cx31.9</shortName>
    </alternativeName>
    <alternativeName>
        <fullName>Gap junction alpha-11 protein</fullName>
    </alternativeName>
    <alternativeName>
        <fullName>Gap junction chi-1 protein</fullName>
    </alternativeName>
</protein>